<proteinExistence type="evidence at protein level"/>
<reference key="1">
    <citation type="journal article" date="1999" name="Nature">
        <title>Evidence for lateral gene transfer between Archaea and Bacteria from genome sequence of Thermotoga maritima.</title>
        <authorList>
            <person name="Nelson K.E."/>
            <person name="Clayton R.A."/>
            <person name="Gill S.R."/>
            <person name="Gwinn M.L."/>
            <person name="Dodson R.J."/>
            <person name="Haft D.H."/>
            <person name="Hickey E.K."/>
            <person name="Peterson J.D."/>
            <person name="Nelson W.C."/>
            <person name="Ketchum K.A."/>
            <person name="McDonald L.A."/>
            <person name="Utterback T.R."/>
            <person name="Malek J.A."/>
            <person name="Linher K.D."/>
            <person name="Garrett M.M."/>
            <person name="Stewart A.M."/>
            <person name="Cotton M.D."/>
            <person name="Pratt M.S."/>
            <person name="Phillips C.A."/>
            <person name="Richardson D.L."/>
            <person name="Heidelberg J.F."/>
            <person name="Sutton G.G."/>
            <person name="Fleischmann R.D."/>
            <person name="Eisen J.A."/>
            <person name="White O."/>
            <person name="Salzberg S.L."/>
            <person name="Smith H.O."/>
            <person name="Venter J.C."/>
            <person name="Fraser C.M."/>
        </authorList>
    </citation>
    <scope>NUCLEOTIDE SEQUENCE [LARGE SCALE GENOMIC DNA]</scope>
    <source>
        <strain>ATCC 43589 / DSM 3109 / JCM 10099 / NBRC 100826 / MSB8</strain>
    </source>
</reference>
<reference key="2">
    <citation type="journal article" date="2004" name="J. Biol. Chem.">
        <title>Structural studies of the catalytic reaction pathway of a hyperthermophilic histidinol-phosphate aminotransferase.</title>
        <authorList>
            <person name="Fernandez F.J."/>
            <person name="Vega M.C."/>
            <person name="Lehmann F."/>
            <person name="Sandmeier E."/>
            <person name="Gehring H."/>
            <person name="Christen P."/>
            <person name="Wilmanns M."/>
        </authorList>
    </citation>
    <scope>X-RAY CRYSTALLOGRAPHY (2.85 ANGSTROMS) OF 6-335</scope>
    <scope>COFACTOR</scope>
    <scope>SUBUNIT</scope>
    <scope>N6-(PYRIDOXAL PHOSPHATE)LYSINE</scope>
</reference>
<sequence length="335" mass="39298">MNPLDLIAKRAYPYETEKRDKTYLALNENPFPFPEDLVDEVFRRLNSDALRIYYDSPDEELIEKILSYLDTDFLSKNNVSVGNGADEIIYVMMLMFDRSVFFPPTYSCYRIFAKAVGAKFLEVPLTKDLRIPEVNVGEGDVVFIPNPNNPTGHVFEREEIERILKTGAFVALDEAYYEFHGESYVDFLKKYENLAVIRTFSKAFSLAAQRVGYVVASEKFIDAYNRVRLPFNVSYVSQMFAKVALDHREIFEERTKFIVEERERMKSALREMGYRITDSRGNFVFVFMEKEEKERLLEHLRTKNVAVRSFREGVRITIGKREENDMILRELEVFK</sequence>
<dbReference type="EC" id="2.6.1.9" evidence="1"/>
<dbReference type="EMBL" id="AE000512">
    <property type="protein sequence ID" value="AAD36117.1"/>
    <property type="molecule type" value="Genomic_DNA"/>
</dbReference>
<dbReference type="PIR" id="G72304">
    <property type="entry name" value="G72304"/>
</dbReference>
<dbReference type="RefSeq" id="NP_228846.1">
    <property type="nucleotide sequence ID" value="NC_000853.1"/>
</dbReference>
<dbReference type="RefSeq" id="WP_004080482.1">
    <property type="nucleotide sequence ID" value="NC_000853.1"/>
</dbReference>
<dbReference type="PDB" id="1H1C">
    <property type="method" value="X-ray"/>
    <property type="resolution" value="2.85 A"/>
    <property type="chains" value="A/B/C/D=1-335"/>
</dbReference>
<dbReference type="PDB" id="1UU0">
    <property type="method" value="X-ray"/>
    <property type="resolution" value="2.85 A"/>
    <property type="chains" value="A/B/C/D=1-335"/>
</dbReference>
<dbReference type="PDB" id="1UU1">
    <property type="method" value="X-ray"/>
    <property type="resolution" value="2.38 A"/>
    <property type="chains" value="A/B/C/D=1-335"/>
</dbReference>
<dbReference type="PDB" id="1UU2">
    <property type="method" value="X-ray"/>
    <property type="resolution" value="2.80 A"/>
    <property type="chains" value="A/B=1-335"/>
</dbReference>
<dbReference type="PDB" id="2F8J">
    <property type="method" value="X-ray"/>
    <property type="resolution" value="2.40 A"/>
    <property type="chains" value="A/B/C/D=1-335"/>
</dbReference>
<dbReference type="PDBsum" id="1H1C"/>
<dbReference type="PDBsum" id="1UU0"/>
<dbReference type="PDBsum" id="1UU1"/>
<dbReference type="PDBsum" id="1UU2"/>
<dbReference type="PDBsum" id="2F8J"/>
<dbReference type="SMR" id="Q9X0D0"/>
<dbReference type="FunCoup" id="Q9X0D0">
    <property type="interactions" value="328"/>
</dbReference>
<dbReference type="STRING" id="243274.TM_1040"/>
<dbReference type="DrugBank" id="DB03997">
    <property type="generic name" value="L-histidinol phosphate"/>
</dbReference>
<dbReference type="DrugBank" id="DB02142">
    <property type="generic name" value="Pyridoxamine-5'-Phosphate"/>
</dbReference>
<dbReference type="PaxDb" id="243274-THEMA_09160"/>
<dbReference type="DNASU" id="897350"/>
<dbReference type="EnsemblBacteria" id="AAD36117">
    <property type="protein sequence ID" value="AAD36117"/>
    <property type="gene ID" value="TM_1040"/>
</dbReference>
<dbReference type="KEGG" id="tma:TM1040"/>
<dbReference type="KEGG" id="tmi:THEMA_09160"/>
<dbReference type="KEGG" id="tmm:Tmari_1044"/>
<dbReference type="KEGG" id="tmw:THMA_1062"/>
<dbReference type="eggNOG" id="COG0079">
    <property type="taxonomic scope" value="Bacteria"/>
</dbReference>
<dbReference type="InParanoid" id="Q9X0D0"/>
<dbReference type="OrthoDB" id="9813612at2"/>
<dbReference type="BRENDA" id="2.6.1.9">
    <property type="organism ID" value="6331"/>
</dbReference>
<dbReference type="SABIO-RK" id="Q9X0D0"/>
<dbReference type="UniPathway" id="UPA00031">
    <property type="reaction ID" value="UER00012"/>
</dbReference>
<dbReference type="EvolutionaryTrace" id="Q9X0D0"/>
<dbReference type="Proteomes" id="UP000008183">
    <property type="component" value="Chromosome"/>
</dbReference>
<dbReference type="GO" id="GO:0004400">
    <property type="term" value="F:histidinol-phosphate transaminase activity"/>
    <property type="evidence" value="ECO:0000314"/>
    <property type="project" value="UniProtKB"/>
</dbReference>
<dbReference type="GO" id="GO:0042803">
    <property type="term" value="F:protein homodimerization activity"/>
    <property type="evidence" value="ECO:0000314"/>
    <property type="project" value="UniProtKB"/>
</dbReference>
<dbReference type="GO" id="GO:0030170">
    <property type="term" value="F:pyridoxal phosphate binding"/>
    <property type="evidence" value="ECO:0000314"/>
    <property type="project" value="UniProtKB"/>
</dbReference>
<dbReference type="GO" id="GO:0000105">
    <property type="term" value="P:L-histidine biosynthetic process"/>
    <property type="evidence" value="ECO:0000314"/>
    <property type="project" value="UniProtKB"/>
</dbReference>
<dbReference type="CDD" id="cd00609">
    <property type="entry name" value="AAT_like"/>
    <property type="match status" value="1"/>
</dbReference>
<dbReference type="Gene3D" id="3.90.1150.10">
    <property type="entry name" value="Aspartate Aminotransferase, domain 1"/>
    <property type="match status" value="1"/>
</dbReference>
<dbReference type="Gene3D" id="3.40.640.10">
    <property type="entry name" value="Type I PLP-dependent aspartate aminotransferase-like (Major domain)"/>
    <property type="match status" value="1"/>
</dbReference>
<dbReference type="HAMAP" id="MF_01023">
    <property type="entry name" value="HisC_aminotrans_2"/>
    <property type="match status" value="1"/>
</dbReference>
<dbReference type="InterPro" id="IPR001917">
    <property type="entry name" value="Aminotrans_II_pyridoxalP_BS"/>
</dbReference>
<dbReference type="InterPro" id="IPR004839">
    <property type="entry name" value="Aminotransferase_I/II_large"/>
</dbReference>
<dbReference type="InterPro" id="IPR005861">
    <property type="entry name" value="HisP_aminotrans"/>
</dbReference>
<dbReference type="InterPro" id="IPR050106">
    <property type="entry name" value="HistidinolP_aminotransfase"/>
</dbReference>
<dbReference type="InterPro" id="IPR015424">
    <property type="entry name" value="PyrdxlP-dep_Trfase"/>
</dbReference>
<dbReference type="InterPro" id="IPR015421">
    <property type="entry name" value="PyrdxlP-dep_Trfase_major"/>
</dbReference>
<dbReference type="InterPro" id="IPR015422">
    <property type="entry name" value="PyrdxlP-dep_Trfase_small"/>
</dbReference>
<dbReference type="NCBIfam" id="TIGR01141">
    <property type="entry name" value="hisC"/>
    <property type="match status" value="1"/>
</dbReference>
<dbReference type="PANTHER" id="PTHR43643:SF3">
    <property type="entry name" value="HISTIDINOL-PHOSPHATE AMINOTRANSFERASE"/>
    <property type="match status" value="1"/>
</dbReference>
<dbReference type="PANTHER" id="PTHR43643">
    <property type="entry name" value="HISTIDINOL-PHOSPHATE AMINOTRANSFERASE 2"/>
    <property type="match status" value="1"/>
</dbReference>
<dbReference type="Pfam" id="PF00155">
    <property type="entry name" value="Aminotran_1_2"/>
    <property type="match status" value="1"/>
</dbReference>
<dbReference type="SUPFAM" id="SSF53383">
    <property type="entry name" value="PLP-dependent transferases"/>
    <property type="match status" value="1"/>
</dbReference>
<dbReference type="PROSITE" id="PS00599">
    <property type="entry name" value="AA_TRANSFER_CLASS_2"/>
    <property type="match status" value="1"/>
</dbReference>
<organism>
    <name type="scientific">Thermotoga maritima (strain ATCC 43589 / DSM 3109 / JCM 10099 / NBRC 100826 / MSB8)</name>
    <dbReference type="NCBI Taxonomy" id="243274"/>
    <lineage>
        <taxon>Bacteria</taxon>
        <taxon>Thermotogati</taxon>
        <taxon>Thermotogota</taxon>
        <taxon>Thermotogae</taxon>
        <taxon>Thermotogales</taxon>
        <taxon>Thermotogaceae</taxon>
        <taxon>Thermotoga</taxon>
    </lineage>
</organism>
<comment type="catalytic activity">
    <reaction evidence="1">
        <text>L-histidinol phosphate + 2-oxoglutarate = 3-(imidazol-4-yl)-2-oxopropyl phosphate + L-glutamate</text>
        <dbReference type="Rhea" id="RHEA:23744"/>
        <dbReference type="ChEBI" id="CHEBI:16810"/>
        <dbReference type="ChEBI" id="CHEBI:29985"/>
        <dbReference type="ChEBI" id="CHEBI:57766"/>
        <dbReference type="ChEBI" id="CHEBI:57980"/>
        <dbReference type="EC" id="2.6.1.9"/>
    </reaction>
</comment>
<comment type="cofactor">
    <cofactor evidence="1 2">
        <name>pyridoxal 5'-phosphate</name>
        <dbReference type="ChEBI" id="CHEBI:597326"/>
    </cofactor>
</comment>
<comment type="pathway">
    <text evidence="1">Amino-acid biosynthesis; L-histidine biosynthesis; L-histidine from 5-phospho-alpha-D-ribose 1-diphosphate: step 7/9.</text>
</comment>
<comment type="subunit">
    <text evidence="1 2">Homodimer.</text>
</comment>
<comment type="similarity">
    <text evidence="1">Belongs to the class-II pyridoxal-phosphate-dependent aminotransferase family. Histidinol-phosphate aminotransferase subfamily.</text>
</comment>
<evidence type="ECO:0000255" key="1">
    <source>
        <dbReference type="HAMAP-Rule" id="MF_01023"/>
    </source>
</evidence>
<evidence type="ECO:0000269" key="2">
    <source>
    </source>
</evidence>
<evidence type="ECO:0007744" key="3">
    <source>
        <dbReference type="PDB" id="1H1C"/>
    </source>
</evidence>
<evidence type="ECO:0007829" key="4">
    <source>
        <dbReference type="PDB" id="1UU1"/>
    </source>
</evidence>
<name>HIS8_THEMA</name>
<protein>
    <recommendedName>
        <fullName evidence="1">Histidinol-phosphate aminotransferase</fullName>
        <ecNumber evidence="1">2.6.1.9</ecNumber>
    </recommendedName>
    <alternativeName>
        <fullName evidence="1">Imidazole acetol-phosphate transaminase</fullName>
    </alternativeName>
</protein>
<feature type="chain" id="PRO_0000153470" description="Histidinol-phosphate aminotransferase">
    <location>
        <begin position="1"/>
        <end position="335"/>
    </location>
</feature>
<feature type="modified residue" description="N6-(pyridoxal phosphate)lysine" evidence="2 3">
    <location>
        <position position="202"/>
    </location>
</feature>
<feature type="helix" evidence="4">
    <location>
        <begin position="2"/>
        <end position="5"/>
    </location>
</feature>
<feature type="strand" evidence="4">
    <location>
        <begin position="21"/>
        <end position="26"/>
    </location>
</feature>
<feature type="helix" evidence="4">
    <location>
        <begin position="35"/>
        <end position="43"/>
    </location>
</feature>
<feature type="helix" evidence="4">
    <location>
        <begin position="47"/>
        <end position="51"/>
    </location>
</feature>
<feature type="helix" evidence="4">
    <location>
        <begin position="59"/>
        <end position="69"/>
    </location>
</feature>
<feature type="helix" evidence="4">
    <location>
        <begin position="76"/>
        <end position="78"/>
    </location>
</feature>
<feature type="strand" evidence="4">
    <location>
        <begin position="79"/>
        <end position="84"/>
    </location>
</feature>
<feature type="helix" evidence="4">
    <location>
        <begin position="85"/>
        <end position="95"/>
    </location>
</feature>
<feature type="strand" evidence="4">
    <location>
        <begin position="96"/>
        <end position="101"/>
    </location>
</feature>
<feature type="strand" evidence="4">
    <location>
        <begin position="103"/>
        <end position="105"/>
    </location>
</feature>
<feature type="helix" evidence="4">
    <location>
        <begin position="108"/>
        <end position="116"/>
    </location>
</feature>
<feature type="strand" evidence="4">
    <location>
        <begin position="119"/>
        <end position="122"/>
    </location>
</feature>
<feature type="strand" evidence="4">
    <location>
        <begin position="140"/>
        <end position="147"/>
    </location>
</feature>
<feature type="turn" evidence="4">
    <location>
        <begin position="149"/>
        <end position="151"/>
    </location>
</feature>
<feature type="helix" evidence="4">
    <location>
        <begin position="157"/>
        <end position="165"/>
    </location>
</feature>
<feature type="strand" evidence="4">
    <location>
        <begin position="169"/>
        <end position="173"/>
    </location>
</feature>
<feature type="helix" evidence="4">
    <location>
        <begin position="177"/>
        <end position="180"/>
    </location>
</feature>
<feature type="helix" evidence="4">
    <location>
        <begin position="185"/>
        <end position="189"/>
    </location>
</feature>
<feature type="strand" evidence="4">
    <location>
        <begin position="192"/>
        <end position="200"/>
    </location>
</feature>
<feature type="turn" evidence="4">
    <location>
        <begin position="201"/>
        <end position="204"/>
    </location>
</feature>
<feature type="helix" evidence="4">
    <location>
        <begin position="207"/>
        <end position="209"/>
    </location>
</feature>
<feature type="strand" evidence="4">
    <location>
        <begin position="212"/>
        <end position="216"/>
    </location>
</feature>
<feature type="helix" evidence="4">
    <location>
        <begin position="218"/>
        <end position="227"/>
    </location>
</feature>
<feature type="helix" evidence="4">
    <location>
        <begin position="235"/>
        <end position="246"/>
    </location>
</feature>
<feature type="helix" evidence="4">
    <location>
        <begin position="248"/>
        <end position="272"/>
    </location>
</feature>
<feature type="strand" evidence="4">
    <location>
        <begin position="281"/>
        <end position="287"/>
    </location>
</feature>
<feature type="helix" evidence="4">
    <location>
        <begin position="291"/>
        <end position="302"/>
    </location>
</feature>
<feature type="strand" evidence="4">
    <location>
        <begin position="305"/>
        <end position="310"/>
    </location>
</feature>
<feature type="strand" evidence="4">
    <location>
        <begin position="313"/>
        <end position="317"/>
    </location>
</feature>
<feature type="helix" evidence="4">
    <location>
        <begin position="321"/>
        <end position="332"/>
    </location>
</feature>
<keyword id="KW-0002">3D-structure</keyword>
<keyword id="KW-0028">Amino-acid biosynthesis</keyword>
<keyword id="KW-0032">Aminotransferase</keyword>
<keyword id="KW-0368">Histidine biosynthesis</keyword>
<keyword id="KW-0663">Pyridoxal phosphate</keyword>
<keyword id="KW-1185">Reference proteome</keyword>
<keyword id="KW-0808">Transferase</keyword>
<gene>
    <name evidence="1" type="primary">hisC</name>
    <name type="ordered locus">TM_1040</name>
</gene>
<accession>Q9X0D0</accession>